<accession>B9LKQ0</accession>
<proteinExistence type="inferred from homology"/>
<feature type="chain" id="PRO_1000125102" description="Nicotinate-nucleotide--dimethylbenzimidazole phosphoribosyltransferase">
    <location>
        <begin position="1"/>
        <end position="351"/>
    </location>
</feature>
<feature type="active site" description="Proton acceptor" evidence="1">
    <location>
        <position position="318"/>
    </location>
</feature>
<organism>
    <name type="scientific">Chloroflexus aurantiacus (strain ATCC 29364 / DSM 637 / Y-400-fl)</name>
    <dbReference type="NCBI Taxonomy" id="480224"/>
    <lineage>
        <taxon>Bacteria</taxon>
        <taxon>Bacillati</taxon>
        <taxon>Chloroflexota</taxon>
        <taxon>Chloroflexia</taxon>
        <taxon>Chloroflexales</taxon>
        <taxon>Chloroflexineae</taxon>
        <taxon>Chloroflexaceae</taxon>
        <taxon>Chloroflexus</taxon>
    </lineage>
</organism>
<sequence length="351" mass="36154">MDLVQSTINQIGPLDDRAATAARRRQDMLTKPAGSLGRLEELSIRIAGITGRERPRLTNPAVIVMAADHGVARQGVSAFPAEVTPQMVLNFLRGGAAINVLARHVGARVIVVDIGVATDLPPHPDLVSRKLAYGTADFSQEPAMSHETARQAIAVGIACANQAIDSGVDLLATGEMGIANTTAASAVVAAITRRPASEVTGRGTGIDDSGLARKIAVIEQALHRHQPNPDDGLDVLAKVGGLEIGGLAGVILGAAARRVPVVIDGFIAGAAALIAATLAPAATAYMIAGHRSVERGHAAVFSHLDLQPLLDLNMRLGEGTGAVLAMSICQAACKILDEMATFAEAGVSEKV</sequence>
<reference key="1">
    <citation type="submission" date="2009-01" db="EMBL/GenBank/DDBJ databases">
        <title>Complete sequence of Chloroflexus sp. Y-400-fl.</title>
        <authorList>
            <consortium name="US DOE Joint Genome Institute"/>
            <person name="Lucas S."/>
            <person name="Copeland A."/>
            <person name="Lapidus A."/>
            <person name="Glavina del Rio T."/>
            <person name="Dalin E."/>
            <person name="Tice H."/>
            <person name="Bruce D."/>
            <person name="Goodwin L."/>
            <person name="Pitluck S."/>
            <person name="Sims D."/>
            <person name="Kiss H."/>
            <person name="Brettin T."/>
            <person name="Detter J.C."/>
            <person name="Han C."/>
            <person name="Larimer F."/>
            <person name="Land M."/>
            <person name="Hauser L."/>
            <person name="Kyrpides N."/>
            <person name="Ovchinnikova G."/>
            <person name="Bryant D.A."/>
            <person name="Richardson P."/>
        </authorList>
    </citation>
    <scope>NUCLEOTIDE SEQUENCE [LARGE SCALE GENOMIC DNA]</scope>
    <source>
        <strain>ATCC 29364 / DSM 637 / Y-400-fl</strain>
    </source>
</reference>
<dbReference type="EC" id="2.4.2.21" evidence="1"/>
<dbReference type="EMBL" id="CP001364">
    <property type="protein sequence ID" value="ACM54175.1"/>
    <property type="molecule type" value="Genomic_DNA"/>
</dbReference>
<dbReference type="SMR" id="B9LKQ0"/>
<dbReference type="KEGG" id="chl:Chy400_2787"/>
<dbReference type="HOGENOM" id="CLU_002982_0_0_0"/>
<dbReference type="OrthoDB" id="9781491at2"/>
<dbReference type="UniPathway" id="UPA00061">
    <property type="reaction ID" value="UER00516"/>
</dbReference>
<dbReference type="GO" id="GO:0008939">
    <property type="term" value="F:nicotinate-nucleotide-dimethylbenzimidazole phosphoribosyltransferase activity"/>
    <property type="evidence" value="ECO:0007669"/>
    <property type="project" value="UniProtKB-UniRule"/>
</dbReference>
<dbReference type="GO" id="GO:0009236">
    <property type="term" value="P:cobalamin biosynthetic process"/>
    <property type="evidence" value="ECO:0007669"/>
    <property type="project" value="UniProtKB-KW"/>
</dbReference>
<dbReference type="CDD" id="cd02439">
    <property type="entry name" value="DMB-PRT_CobT"/>
    <property type="match status" value="1"/>
</dbReference>
<dbReference type="FunFam" id="3.40.50.10210:FF:000001">
    <property type="entry name" value="Nicotinate-nucleotide--dimethylbenzimidazole phosphoribosyltransferase"/>
    <property type="match status" value="1"/>
</dbReference>
<dbReference type="Gene3D" id="1.10.1610.10">
    <property type="match status" value="1"/>
</dbReference>
<dbReference type="Gene3D" id="3.40.50.10210">
    <property type="match status" value="1"/>
</dbReference>
<dbReference type="HAMAP" id="MF_00230">
    <property type="entry name" value="CobT"/>
    <property type="match status" value="1"/>
</dbReference>
<dbReference type="InterPro" id="IPR003200">
    <property type="entry name" value="Nict_dMeBzImd_PRibTrfase"/>
</dbReference>
<dbReference type="InterPro" id="IPR017846">
    <property type="entry name" value="Nict_dMeBzImd_PRibTrfase_bact"/>
</dbReference>
<dbReference type="InterPro" id="IPR023195">
    <property type="entry name" value="Nict_dMeBzImd_PRibTrfase_N"/>
</dbReference>
<dbReference type="InterPro" id="IPR036087">
    <property type="entry name" value="Nict_dMeBzImd_PRibTrfase_sf"/>
</dbReference>
<dbReference type="NCBIfam" id="TIGR03160">
    <property type="entry name" value="cobT_DBIPRT"/>
    <property type="match status" value="1"/>
</dbReference>
<dbReference type="NCBIfam" id="NF000996">
    <property type="entry name" value="PRK00105.1"/>
    <property type="match status" value="1"/>
</dbReference>
<dbReference type="PANTHER" id="PTHR43463">
    <property type="entry name" value="NICOTINATE-NUCLEOTIDE--DIMETHYLBENZIMIDAZOLE PHOSPHORIBOSYLTRANSFERASE"/>
    <property type="match status" value="1"/>
</dbReference>
<dbReference type="PANTHER" id="PTHR43463:SF1">
    <property type="entry name" value="NICOTINATE-NUCLEOTIDE--DIMETHYLBENZIMIDAZOLE PHOSPHORIBOSYLTRANSFERASE"/>
    <property type="match status" value="1"/>
</dbReference>
<dbReference type="Pfam" id="PF02277">
    <property type="entry name" value="DBI_PRT"/>
    <property type="match status" value="1"/>
</dbReference>
<dbReference type="SUPFAM" id="SSF52733">
    <property type="entry name" value="Nicotinate mononucleotide:5,6-dimethylbenzimidazole phosphoribosyltransferase (CobT)"/>
    <property type="match status" value="1"/>
</dbReference>
<protein>
    <recommendedName>
        <fullName evidence="1">Nicotinate-nucleotide--dimethylbenzimidazole phosphoribosyltransferase</fullName>
        <shortName evidence="1">NN:DBI PRT</shortName>
        <ecNumber evidence="1">2.4.2.21</ecNumber>
    </recommendedName>
    <alternativeName>
        <fullName evidence="1">N(1)-alpha-phosphoribosyltransferase</fullName>
    </alternativeName>
</protein>
<evidence type="ECO:0000255" key="1">
    <source>
        <dbReference type="HAMAP-Rule" id="MF_00230"/>
    </source>
</evidence>
<gene>
    <name evidence="1" type="primary">cobT</name>
    <name type="ordered locus">Chy400_2787</name>
</gene>
<name>COBT_CHLSY</name>
<comment type="function">
    <text evidence="1">Catalyzes the synthesis of alpha-ribazole-5'-phosphate from nicotinate mononucleotide (NAMN) and 5,6-dimethylbenzimidazole (DMB).</text>
</comment>
<comment type="catalytic activity">
    <reaction evidence="1">
        <text>5,6-dimethylbenzimidazole + nicotinate beta-D-ribonucleotide = alpha-ribazole 5'-phosphate + nicotinate + H(+)</text>
        <dbReference type="Rhea" id="RHEA:11196"/>
        <dbReference type="ChEBI" id="CHEBI:15378"/>
        <dbReference type="ChEBI" id="CHEBI:15890"/>
        <dbReference type="ChEBI" id="CHEBI:32544"/>
        <dbReference type="ChEBI" id="CHEBI:57502"/>
        <dbReference type="ChEBI" id="CHEBI:57918"/>
        <dbReference type="EC" id="2.4.2.21"/>
    </reaction>
</comment>
<comment type="pathway">
    <text evidence="1">Nucleoside biosynthesis; alpha-ribazole biosynthesis; alpha-ribazole from 5,6-dimethylbenzimidazole: step 1/2.</text>
</comment>
<comment type="similarity">
    <text evidence="1">Belongs to the CobT family.</text>
</comment>
<keyword id="KW-0169">Cobalamin biosynthesis</keyword>
<keyword id="KW-0328">Glycosyltransferase</keyword>
<keyword id="KW-0808">Transferase</keyword>